<name>ULAF_ECOLC</name>
<feature type="chain" id="PRO_1000088485" description="L-ribulose-5-phosphate 4-epimerase UlaF">
    <location>
        <begin position="1"/>
        <end position="228"/>
    </location>
</feature>
<feature type="active site" description="Proton donor/acceptor" evidence="1">
    <location>
        <position position="118"/>
    </location>
</feature>
<feature type="active site" description="Proton donor/acceptor" evidence="1">
    <location>
        <position position="225"/>
    </location>
</feature>
<feature type="binding site" evidence="1">
    <location>
        <begin position="26"/>
        <end position="27"/>
    </location>
    <ligand>
        <name>substrate</name>
    </ligand>
</feature>
<feature type="binding site" evidence="1">
    <location>
        <begin position="43"/>
        <end position="44"/>
    </location>
    <ligand>
        <name>substrate</name>
    </ligand>
</feature>
<feature type="binding site" evidence="1">
    <location>
        <begin position="72"/>
        <end position="73"/>
    </location>
    <ligand>
        <name>substrate</name>
    </ligand>
</feature>
<feature type="binding site" evidence="1">
    <location>
        <position position="74"/>
    </location>
    <ligand>
        <name>Zn(2+)</name>
        <dbReference type="ChEBI" id="CHEBI:29105"/>
    </ligand>
</feature>
<feature type="binding site" evidence="1">
    <location>
        <position position="93"/>
    </location>
    <ligand>
        <name>Zn(2+)</name>
        <dbReference type="ChEBI" id="CHEBI:29105"/>
    </ligand>
</feature>
<feature type="binding site" evidence="1">
    <location>
        <position position="95"/>
    </location>
    <ligand>
        <name>Zn(2+)</name>
        <dbReference type="ChEBI" id="CHEBI:29105"/>
    </ligand>
</feature>
<feature type="binding site" evidence="1">
    <location>
        <position position="167"/>
    </location>
    <ligand>
        <name>Zn(2+)</name>
        <dbReference type="ChEBI" id="CHEBI:29105"/>
    </ligand>
</feature>
<accession>B1IT08</accession>
<dbReference type="EC" id="5.1.3.4" evidence="1"/>
<dbReference type="EMBL" id="CP000946">
    <property type="protein sequence ID" value="ACA79419.1"/>
    <property type="molecule type" value="Genomic_DNA"/>
</dbReference>
<dbReference type="RefSeq" id="WP_001170839.1">
    <property type="nucleotide sequence ID" value="NC_010468.1"/>
</dbReference>
<dbReference type="SMR" id="B1IT08"/>
<dbReference type="KEGG" id="ecl:EcolC_3815"/>
<dbReference type="HOGENOM" id="CLU_006033_5_0_6"/>
<dbReference type="UniPathway" id="UPA00263">
    <property type="reaction ID" value="UER00380"/>
</dbReference>
<dbReference type="GO" id="GO:0005829">
    <property type="term" value="C:cytosol"/>
    <property type="evidence" value="ECO:0007669"/>
    <property type="project" value="TreeGrafter"/>
</dbReference>
<dbReference type="GO" id="GO:0016832">
    <property type="term" value="F:aldehyde-lyase activity"/>
    <property type="evidence" value="ECO:0007669"/>
    <property type="project" value="TreeGrafter"/>
</dbReference>
<dbReference type="GO" id="GO:0008742">
    <property type="term" value="F:L-ribulose-phosphate 4-epimerase activity"/>
    <property type="evidence" value="ECO:0007669"/>
    <property type="project" value="UniProtKB-UniRule"/>
</dbReference>
<dbReference type="GO" id="GO:0008270">
    <property type="term" value="F:zinc ion binding"/>
    <property type="evidence" value="ECO:0007669"/>
    <property type="project" value="UniProtKB-UniRule"/>
</dbReference>
<dbReference type="GO" id="GO:0019854">
    <property type="term" value="P:L-ascorbic acid catabolic process"/>
    <property type="evidence" value="ECO:0007669"/>
    <property type="project" value="UniProtKB-UniRule"/>
</dbReference>
<dbReference type="GO" id="GO:0019323">
    <property type="term" value="P:pentose catabolic process"/>
    <property type="evidence" value="ECO:0007669"/>
    <property type="project" value="TreeGrafter"/>
</dbReference>
<dbReference type="CDD" id="cd00398">
    <property type="entry name" value="Aldolase_II"/>
    <property type="match status" value="1"/>
</dbReference>
<dbReference type="FunFam" id="3.40.225.10:FF:000001">
    <property type="entry name" value="L-ribulose-5-phosphate 4-epimerase UlaF"/>
    <property type="match status" value="1"/>
</dbReference>
<dbReference type="Gene3D" id="3.40.225.10">
    <property type="entry name" value="Class II aldolase/adducin N-terminal domain"/>
    <property type="match status" value="1"/>
</dbReference>
<dbReference type="HAMAP" id="MF_01952">
    <property type="entry name" value="UlaF"/>
    <property type="match status" value="1"/>
</dbReference>
<dbReference type="InterPro" id="IPR050197">
    <property type="entry name" value="Aldolase_class_II_sugar_metab"/>
</dbReference>
<dbReference type="InterPro" id="IPR001303">
    <property type="entry name" value="Aldolase_II/adducin_N"/>
</dbReference>
<dbReference type="InterPro" id="IPR036409">
    <property type="entry name" value="Aldolase_II/adducin_N_sf"/>
</dbReference>
<dbReference type="InterPro" id="IPR023499">
    <property type="entry name" value="UlaF"/>
</dbReference>
<dbReference type="NCBIfam" id="NF006047">
    <property type="entry name" value="PRK08193.1"/>
    <property type="match status" value="1"/>
</dbReference>
<dbReference type="NCBIfam" id="NF009003">
    <property type="entry name" value="PRK12348.1"/>
    <property type="match status" value="1"/>
</dbReference>
<dbReference type="PANTHER" id="PTHR22789">
    <property type="entry name" value="FUCULOSE PHOSPHATE ALDOLASE"/>
    <property type="match status" value="1"/>
</dbReference>
<dbReference type="PANTHER" id="PTHR22789:SF9">
    <property type="entry name" value="L-RIBULOSE-5-PHOSPHATE 4-EPIMERASE ULAF"/>
    <property type="match status" value="1"/>
</dbReference>
<dbReference type="Pfam" id="PF00596">
    <property type="entry name" value="Aldolase_II"/>
    <property type="match status" value="1"/>
</dbReference>
<dbReference type="SMART" id="SM01007">
    <property type="entry name" value="Aldolase_II"/>
    <property type="match status" value="1"/>
</dbReference>
<dbReference type="SUPFAM" id="SSF53639">
    <property type="entry name" value="AraD/HMP-PK domain-like"/>
    <property type="match status" value="1"/>
</dbReference>
<reference key="1">
    <citation type="submission" date="2008-02" db="EMBL/GenBank/DDBJ databases">
        <title>Complete sequence of Escherichia coli C str. ATCC 8739.</title>
        <authorList>
            <person name="Copeland A."/>
            <person name="Lucas S."/>
            <person name="Lapidus A."/>
            <person name="Glavina del Rio T."/>
            <person name="Dalin E."/>
            <person name="Tice H."/>
            <person name="Bruce D."/>
            <person name="Goodwin L."/>
            <person name="Pitluck S."/>
            <person name="Kiss H."/>
            <person name="Brettin T."/>
            <person name="Detter J.C."/>
            <person name="Han C."/>
            <person name="Kuske C.R."/>
            <person name="Schmutz J."/>
            <person name="Larimer F."/>
            <person name="Land M."/>
            <person name="Hauser L."/>
            <person name="Kyrpides N."/>
            <person name="Mikhailova N."/>
            <person name="Ingram L."/>
            <person name="Richardson P."/>
        </authorList>
    </citation>
    <scope>NUCLEOTIDE SEQUENCE [LARGE SCALE GENOMIC DNA]</scope>
    <source>
        <strain>ATCC 8739 / DSM 1576 / NBRC 3972 / NCIMB 8545 / WDCM 00012 / Crooks</strain>
    </source>
</reference>
<protein>
    <recommendedName>
        <fullName evidence="1">L-ribulose-5-phosphate 4-epimerase UlaF</fullName>
        <ecNumber evidence="1">5.1.3.4</ecNumber>
    </recommendedName>
    <alternativeName>
        <fullName evidence="1">L-ascorbate utilization protein F</fullName>
    </alternativeName>
    <alternativeName>
        <fullName evidence="1">Phosphoribulose isomerase</fullName>
    </alternativeName>
</protein>
<proteinExistence type="inferred from homology"/>
<keyword id="KW-0119">Carbohydrate metabolism</keyword>
<keyword id="KW-0413">Isomerase</keyword>
<keyword id="KW-0479">Metal-binding</keyword>
<keyword id="KW-0862">Zinc</keyword>
<sequence length="228" mass="25280">MQKLKQQVFEANMELPRYGLATFTWGNVSAIDRERGLVVIKPSGVAYETMKAADMVVVDMSGKVVEGEYRPSSDTATHLELYRRYPSLGGIVHTHSTHATAWAQAGLAIPALGTTHADYFFGDIPCTRGLSEEEVQGEYELNTGKVIIETLGNAEPLHTPGIVVYQHGPFAWGKDAHDAVHNAVVMEEVAKMAWIARSINPQLNHIDSFLMNKHFMRKHGPNAYYGQK</sequence>
<gene>
    <name evidence="1" type="primary">ulaF</name>
    <name type="ordered locus">EcolC_3815</name>
</gene>
<organism>
    <name type="scientific">Escherichia coli (strain ATCC 8739 / DSM 1576 / NBRC 3972 / NCIMB 8545 / WDCM 00012 / Crooks)</name>
    <dbReference type="NCBI Taxonomy" id="481805"/>
    <lineage>
        <taxon>Bacteria</taxon>
        <taxon>Pseudomonadati</taxon>
        <taxon>Pseudomonadota</taxon>
        <taxon>Gammaproteobacteria</taxon>
        <taxon>Enterobacterales</taxon>
        <taxon>Enterobacteriaceae</taxon>
        <taxon>Escherichia</taxon>
    </lineage>
</organism>
<comment type="function">
    <text evidence="1">Catalyzes the isomerization of L-ribulose 5-phosphate to D-xylulose 5-phosphate. Is involved in the anaerobic L-ascorbate utilization.</text>
</comment>
<comment type="catalytic activity">
    <reaction evidence="1">
        <text>L-ribulose 5-phosphate = D-xylulose 5-phosphate</text>
        <dbReference type="Rhea" id="RHEA:22368"/>
        <dbReference type="ChEBI" id="CHEBI:57737"/>
        <dbReference type="ChEBI" id="CHEBI:58226"/>
        <dbReference type="EC" id="5.1.3.4"/>
    </reaction>
</comment>
<comment type="cofactor">
    <cofactor evidence="1">
        <name>Zn(2+)</name>
        <dbReference type="ChEBI" id="CHEBI:29105"/>
    </cofactor>
    <text evidence="1">Binds 1 zinc ion per subunit.</text>
</comment>
<comment type="pathway">
    <text evidence="1">Cofactor degradation; L-ascorbate degradation; D-xylulose 5-phosphate from L-ascorbate: step 4/4.</text>
</comment>
<comment type="induction">
    <text evidence="1">Induced by L-ascorbate. Repressed by UlaR.</text>
</comment>
<comment type="similarity">
    <text evidence="1">Belongs to the aldolase class II family. AraD/FucA subfamily.</text>
</comment>
<evidence type="ECO:0000255" key="1">
    <source>
        <dbReference type="HAMAP-Rule" id="MF_01952"/>
    </source>
</evidence>